<name>ZN735_HUMAN</name>
<keyword id="KW-0238">DNA-binding</keyword>
<keyword id="KW-0479">Metal-binding</keyword>
<keyword id="KW-0539">Nucleus</keyword>
<keyword id="KW-1185">Reference proteome</keyword>
<keyword id="KW-0677">Repeat</keyword>
<keyword id="KW-0804">Transcription</keyword>
<keyword id="KW-0805">Transcription regulation</keyword>
<keyword id="KW-0862">Zinc</keyword>
<keyword id="KW-0863">Zinc-finger</keyword>
<proteinExistence type="inferred from homology"/>
<sequence>MAKRPGPPGSREMGLLTFRDIAIEFSLAEWQCLDHAQQNLYRDVMLENYRNLFSLGMTVSKPDLIACLEQNKEPQNIKRNEMAAKHPVTCSHFNQDLQPEQSIKDSLQKVIPRTYGKCGHENLQLKKCCKRVDECEVHKGGYNDLNQCLSNTQNKIFQTHKCVKVFSKFSNSNRHNARYTGKKHLKCKKYGKSFCMFSHLNQHQIIHTKEKSYKCEECGKSFNHSSSGTTHKRILTGEKPYRCEECGKAFRWPSNLTRHKRIHTGEKPYACEECGQAFRRSSTLTNHKRIHTGERPYKCEECGKAFSVSSALIYHKRIHTGEKPYTCEECGKAFNCSSTLKTHKIIHTGEKPYTCEECGRTFNCSSTVKAHKRIHTGEKPYKCEECDKAFKWHSSLAKHKIIHTGEKPYKCK</sequence>
<gene>
    <name type="primary">ZNF735</name>
    <name type="synonym">ZNF735P</name>
</gene>
<accession>P0CB33</accession>
<comment type="function">
    <text evidence="1">May be involved in transcriptional regulation.</text>
</comment>
<comment type="subcellular location">
    <subcellularLocation>
        <location evidence="1">Nucleus</location>
    </subcellularLocation>
</comment>
<comment type="similarity">
    <text evidence="4">Belongs to the krueppel C2H2-type zinc-finger protein family.</text>
</comment>
<dbReference type="EMBL" id="AC073270">
    <property type="status" value="NOT_ANNOTATED_CDS"/>
    <property type="molecule type" value="Genomic_DNA"/>
</dbReference>
<dbReference type="EMBL" id="AC104094">
    <property type="status" value="NOT_ANNOTATED_CDS"/>
    <property type="molecule type" value="Genomic_DNA"/>
</dbReference>
<dbReference type="CCDS" id="CCDS78236.1"/>
<dbReference type="RefSeq" id="NP_001152996.1">
    <property type="nucleotide sequence ID" value="NM_001159524.1"/>
</dbReference>
<dbReference type="SMR" id="P0CB33"/>
<dbReference type="BioGRID" id="610679">
    <property type="interactions" value="1"/>
</dbReference>
<dbReference type="FunCoup" id="P0CB33">
    <property type="interactions" value="1"/>
</dbReference>
<dbReference type="STRING" id="9606.ENSP00000485547"/>
<dbReference type="iPTMnet" id="P0CB33"/>
<dbReference type="PhosphoSitePlus" id="P0CB33"/>
<dbReference type="BioMuta" id="ZNF735"/>
<dbReference type="DMDM" id="259710468"/>
<dbReference type="jPOST" id="P0CB33"/>
<dbReference type="MassIVE" id="P0CB33"/>
<dbReference type="PaxDb" id="9606-ENSP00000485193"/>
<dbReference type="PeptideAtlas" id="P0CB33"/>
<dbReference type="ProteomicsDB" id="52432"/>
<dbReference type="Antibodypedia" id="74087">
    <property type="antibodies" value="22 antibodies from 8 providers"/>
</dbReference>
<dbReference type="DNASU" id="730291"/>
<dbReference type="Ensembl" id="ENST00000429565.5">
    <property type="protein sequence ID" value="ENSP00000485547.1"/>
    <property type="gene ID" value="ENSG00000223614.6"/>
</dbReference>
<dbReference type="GeneID" id="730291"/>
<dbReference type="KEGG" id="hsa:730291"/>
<dbReference type="MANE-Select" id="ENST00000429565.5">
    <property type="protein sequence ID" value="ENSP00000485547.1"/>
    <property type="RefSeq nucleotide sequence ID" value="NM_001159524.1"/>
    <property type="RefSeq protein sequence ID" value="NP_001152996.1"/>
</dbReference>
<dbReference type="UCSC" id="uc011kdn.3">
    <property type="organism name" value="human"/>
</dbReference>
<dbReference type="AGR" id="HGNC:32466"/>
<dbReference type="CTD" id="730291"/>
<dbReference type="GeneCards" id="ZNF735"/>
<dbReference type="HGNC" id="HGNC:32466">
    <property type="gene designation" value="ZNF735"/>
</dbReference>
<dbReference type="HPA" id="ENSG00000223614">
    <property type="expression patterns" value="Not detected"/>
</dbReference>
<dbReference type="neXtProt" id="NX_P0CB33"/>
<dbReference type="PharmGKB" id="PA162410268"/>
<dbReference type="VEuPathDB" id="HostDB:ENSG00000223614"/>
<dbReference type="GeneTree" id="ENSGT00940000153236"/>
<dbReference type="HOGENOM" id="CLU_002678_0_10_1"/>
<dbReference type="InParanoid" id="P0CB33"/>
<dbReference type="OMA" id="LKCEKYG"/>
<dbReference type="OrthoDB" id="9044188at2759"/>
<dbReference type="PAN-GO" id="P0CB33">
    <property type="GO annotations" value="3 GO annotations based on evolutionary models"/>
</dbReference>
<dbReference type="PhylomeDB" id="P0CB33"/>
<dbReference type="PathwayCommons" id="P0CB33"/>
<dbReference type="Reactome" id="R-HSA-212436">
    <property type="pathway name" value="Generic Transcription Pathway"/>
</dbReference>
<dbReference type="BioGRID-ORCS" id="730291">
    <property type="hits" value="8 hits in 250 CRISPR screens"/>
</dbReference>
<dbReference type="ChiTaRS" id="ZNF735">
    <property type="organism name" value="human"/>
</dbReference>
<dbReference type="GenomeRNAi" id="730291"/>
<dbReference type="Pharos" id="P0CB33">
    <property type="development level" value="Tdark"/>
</dbReference>
<dbReference type="PRO" id="PR:P0CB33"/>
<dbReference type="Proteomes" id="UP000005640">
    <property type="component" value="Chromosome 7"/>
</dbReference>
<dbReference type="RNAct" id="P0CB33">
    <property type="molecule type" value="protein"/>
</dbReference>
<dbReference type="GO" id="GO:0005634">
    <property type="term" value="C:nucleus"/>
    <property type="evidence" value="ECO:0007669"/>
    <property type="project" value="UniProtKB-SubCell"/>
</dbReference>
<dbReference type="GO" id="GO:0000981">
    <property type="term" value="F:DNA-binding transcription factor activity, RNA polymerase II-specific"/>
    <property type="evidence" value="ECO:0000318"/>
    <property type="project" value="GO_Central"/>
</dbReference>
<dbReference type="GO" id="GO:0000978">
    <property type="term" value="F:RNA polymerase II cis-regulatory region sequence-specific DNA binding"/>
    <property type="evidence" value="ECO:0000318"/>
    <property type="project" value="GO_Central"/>
</dbReference>
<dbReference type="GO" id="GO:0008270">
    <property type="term" value="F:zinc ion binding"/>
    <property type="evidence" value="ECO:0007669"/>
    <property type="project" value="UniProtKB-KW"/>
</dbReference>
<dbReference type="GO" id="GO:0006355">
    <property type="term" value="P:regulation of DNA-templated transcription"/>
    <property type="evidence" value="ECO:0000318"/>
    <property type="project" value="GO_Central"/>
</dbReference>
<dbReference type="CDD" id="cd07765">
    <property type="entry name" value="KRAB_A-box"/>
    <property type="match status" value="1"/>
</dbReference>
<dbReference type="FunFam" id="3.30.160.60:FF:000034">
    <property type="entry name" value="zinc finger protein 25"/>
    <property type="match status" value="1"/>
</dbReference>
<dbReference type="FunFam" id="3.30.160.60:FF:001868">
    <property type="entry name" value="Zinc finger protein 264"/>
    <property type="match status" value="1"/>
</dbReference>
<dbReference type="FunFam" id="3.30.160.60:FF:000690">
    <property type="entry name" value="Zinc finger protein 354C"/>
    <property type="match status" value="1"/>
</dbReference>
<dbReference type="FunFam" id="3.30.160.60:FF:000016">
    <property type="entry name" value="zinc finger protein 37 homolog"/>
    <property type="match status" value="1"/>
</dbReference>
<dbReference type="FunFam" id="3.30.160.60:FF:000362">
    <property type="entry name" value="Zinc finger protein 606"/>
    <property type="match status" value="2"/>
</dbReference>
<dbReference type="FunFam" id="3.30.160.60:FF:002811">
    <property type="entry name" value="Zinc finger protein 679"/>
    <property type="match status" value="1"/>
</dbReference>
<dbReference type="Gene3D" id="6.10.140.140">
    <property type="match status" value="1"/>
</dbReference>
<dbReference type="Gene3D" id="3.30.160.60">
    <property type="entry name" value="Classic Zinc Finger"/>
    <property type="match status" value="8"/>
</dbReference>
<dbReference type="InterPro" id="IPR050589">
    <property type="entry name" value="Ikaros_C2H2-ZF"/>
</dbReference>
<dbReference type="InterPro" id="IPR001909">
    <property type="entry name" value="KRAB"/>
</dbReference>
<dbReference type="InterPro" id="IPR036051">
    <property type="entry name" value="KRAB_dom_sf"/>
</dbReference>
<dbReference type="InterPro" id="IPR036236">
    <property type="entry name" value="Znf_C2H2_sf"/>
</dbReference>
<dbReference type="InterPro" id="IPR013087">
    <property type="entry name" value="Znf_C2H2_type"/>
</dbReference>
<dbReference type="PANTHER" id="PTHR24404">
    <property type="entry name" value="ZINC FINGER PROTEIN"/>
    <property type="match status" value="1"/>
</dbReference>
<dbReference type="PANTHER" id="PTHR24404:SF100">
    <property type="entry name" value="ZINC FINGER PROTEIN 501"/>
    <property type="match status" value="1"/>
</dbReference>
<dbReference type="Pfam" id="PF01352">
    <property type="entry name" value="KRAB"/>
    <property type="match status" value="1"/>
</dbReference>
<dbReference type="Pfam" id="PF00096">
    <property type="entry name" value="zf-C2H2"/>
    <property type="match status" value="7"/>
</dbReference>
<dbReference type="SMART" id="SM00349">
    <property type="entry name" value="KRAB"/>
    <property type="match status" value="1"/>
</dbReference>
<dbReference type="SMART" id="SM00355">
    <property type="entry name" value="ZnF_C2H2"/>
    <property type="match status" value="8"/>
</dbReference>
<dbReference type="SUPFAM" id="SSF57667">
    <property type="entry name" value="beta-beta-alpha zinc fingers"/>
    <property type="match status" value="5"/>
</dbReference>
<dbReference type="SUPFAM" id="SSF109640">
    <property type="entry name" value="KRAB domain (Kruppel-associated box)"/>
    <property type="match status" value="1"/>
</dbReference>
<dbReference type="PROSITE" id="PS50805">
    <property type="entry name" value="KRAB"/>
    <property type="match status" value="1"/>
</dbReference>
<dbReference type="PROSITE" id="PS00028">
    <property type="entry name" value="ZINC_FINGER_C2H2_1"/>
    <property type="match status" value="6"/>
</dbReference>
<dbReference type="PROSITE" id="PS50157">
    <property type="entry name" value="ZINC_FINGER_C2H2_2"/>
    <property type="match status" value="8"/>
</dbReference>
<evidence type="ECO:0000250" key="1"/>
<evidence type="ECO:0000255" key="2">
    <source>
        <dbReference type="PROSITE-ProRule" id="PRU00042"/>
    </source>
</evidence>
<evidence type="ECO:0000255" key="3">
    <source>
        <dbReference type="PROSITE-ProRule" id="PRU00119"/>
    </source>
</evidence>
<evidence type="ECO:0000305" key="4"/>
<reference key="1">
    <citation type="journal article" date="2003" name="Nature">
        <title>The DNA sequence of human chromosome 7.</title>
        <authorList>
            <person name="Hillier L.W."/>
            <person name="Fulton R.S."/>
            <person name="Fulton L.A."/>
            <person name="Graves T.A."/>
            <person name="Pepin K.H."/>
            <person name="Wagner-McPherson C."/>
            <person name="Layman D."/>
            <person name="Maas J."/>
            <person name="Jaeger S."/>
            <person name="Walker R."/>
            <person name="Wylie K."/>
            <person name="Sekhon M."/>
            <person name="Becker M.C."/>
            <person name="O'Laughlin M.D."/>
            <person name="Schaller M.E."/>
            <person name="Fewell G.A."/>
            <person name="Delehaunty K.D."/>
            <person name="Miner T.L."/>
            <person name="Nash W.E."/>
            <person name="Cordes M."/>
            <person name="Du H."/>
            <person name="Sun H."/>
            <person name="Edwards J."/>
            <person name="Bradshaw-Cordum H."/>
            <person name="Ali J."/>
            <person name="Andrews S."/>
            <person name="Isak A."/>
            <person name="Vanbrunt A."/>
            <person name="Nguyen C."/>
            <person name="Du F."/>
            <person name="Lamar B."/>
            <person name="Courtney L."/>
            <person name="Kalicki J."/>
            <person name="Ozersky P."/>
            <person name="Bielicki L."/>
            <person name="Scott K."/>
            <person name="Holmes A."/>
            <person name="Harkins R."/>
            <person name="Harris A."/>
            <person name="Strong C.M."/>
            <person name="Hou S."/>
            <person name="Tomlinson C."/>
            <person name="Dauphin-Kohlberg S."/>
            <person name="Kozlowicz-Reilly A."/>
            <person name="Leonard S."/>
            <person name="Rohlfing T."/>
            <person name="Rock S.M."/>
            <person name="Tin-Wollam A.-M."/>
            <person name="Abbott A."/>
            <person name="Minx P."/>
            <person name="Maupin R."/>
            <person name="Strowmatt C."/>
            <person name="Latreille P."/>
            <person name="Miller N."/>
            <person name="Johnson D."/>
            <person name="Murray J."/>
            <person name="Woessner J.P."/>
            <person name="Wendl M.C."/>
            <person name="Yang S.-P."/>
            <person name="Schultz B.R."/>
            <person name="Wallis J.W."/>
            <person name="Spieth J."/>
            <person name="Bieri T.A."/>
            <person name="Nelson J.O."/>
            <person name="Berkowicz N."/>
            <person name="Wohldmann P.E."/>
            <person name="Cook L.L."/>
            <person name="Hickenbotham M.T."/>
            <person name="Eldred J."/>
            <person name="Williams D."/>
            <person name="Bedell J.A."/>
            <person name="Mardis E.R."/>
            <person name="Clifton S.W."/>
            <person name="Chissoe S.L."/>
            <person name="Marra M.A."/>
            <person name="Raymond C."/>
            <person name="Haugen E."/>
            <person name="Gillett W."/>
            <person name="Zhou Y."/>
            <person name="James R."/>
            <person name="Phelps K."/>
            <person name="Iadanoto S."/>
            <person name="Bubb K."/>
            <person name="Simms E."/>
            <person name="Levy R."/>
            <person name="Clendenning J."/>
            <person name="Kaul R."/>
            <person name="Kent W.J."/>
            <person name="Furey T.S."/>
            <person name="Baertsch R.A."/>
            <person name="Brent M.R."/>
            <person name="Keibler E."/>
            <person name="Flicek P."/>
            <person name="Bork P."/>
            <person name="Suyama M."/>
            <person name="Bailey J.A."/>
            <person name="Portnoy M.E."/>
            <person name="Torrents D."/>
            <person name="Chinwalla A.T."/>
            <person name="Gish W.R."/>
            <person name="Eddy S.R."/>
            <person name="McPherson J.D."/>
            <person name="Olson M.V."/>
            <person name="Eichler E.E."/>
            <person name="Green E.D."/>
            <person name="Waterston R.H."/>
            <person name="Wilson R.K."/>
        </authorList>
    </citation>
    <scope>NUCLEOTIDE SEQUENCE [LARGE SCALE GENOMIC DNA]</scope>
</reference>
<feature type="chain" id="PRO_0000383475" description="Zinc finger protein 735">
    <location>
        <begin position="1"/>
        <end position="412"/>
    </location>
</feature>
<feature type="domain" description="KRAB" evidence="3">
    <location>
        <begin position="16"/>
        <end position="87"/>
    </location>
</feature>
<feature type="zinc finger region" description="C2H2-type 1; degenerate" evidence="2">
    <location>
        <begin position="157"/>
        <end position="179"/>
    </location>
</feature>
<feature type="zinc finger region" description="C2H2-type 2; degenerate" evidence="2">
    <location>
        <begin position="185"/>
        <end position="207"/>
    </location>
</feature>
<feature type="zinc finger region" description="C2H2-type 3; degenerate" evidence="2">
    <location>
        <begin position="213"/>
        <end position="235"/>
    </location>
</feature>
<feature type="zinc finger region" description="C2H2-type 4" evidence="2">
    <location>
        <begin position="241"/>
        <end position="263"/>
    </location>
</feature>
<feature type="zinc finger region" description="C2H2-type 5" evidence="2">
    <location>
        <begin position="269"/>
        <end position="291"/>
    </location>
</feature>
<feature type="zinc finger region" description="C2H2-type 6" evidence="2">
    <location>
        <begin position="297"/>
        <end position="319"/>
    </location>
</feature>
<feature type="zinc finger region" description="C2H2-type 7" evidence="2">
    <location>
        <begin position="325"/>
        <end position="347"/>
    </location>
</feature>
<feature type="zinc finger region" description="C2H2-type 8" evidence="2">
    <location>
        <begin position="353"/>
        <end position="375"/>
    </location>
</feature>
<feature type="zinc finger region" description="C2H2-type 9" evidence="2">
    <location>
        <begin position="381"/>
        <end position="403"/>
    </location>
</feature>
<organism>
    <name type="scientific">Homo sapiens</name>
    <name type="common">Human</name>
    <dbReference type="NCBI Taxonomy" id="9606"/>
    <lineage>
        <taxon>Eukaryota</taxon>
        <taxon>Metazoa</taxon>
        <taxon>Chordata</taxon>
        <taxon>Craniata</taxon>
        <taxon>Vertebrata</taxon>
        <taxon>Euteleostomi</taxon>
        <taxon>Mammalia</taxon>
        <taxon>Eutheria</taxon>
        <taxon>Euarchontoglires</taxon>
        <taxon>Primates</taxon>
        <taxon>Haplorrhini</taxon>
        <taxon>Catarrhini</taxon>
        <taxon>Hominidae</taxon>
        <taxon>Homo</taxon>
    </lineage>
</organism>
<protein>
    <recommendedName>
        <fullName>Zinc finger protein 735</fullName>
    </recommendedName>
</protein>